<feature type="chain" id="PRO_0000325900" description="Ciliary microtubule inner protein 2A">
    <location>
        <begin position="1"/>
        <end position="317"/>
    </location>
</feature>
<feature type="region of interest" description="Disordered" evidence="3">
    <location>
        <begin position="131"/>
        <end position="153"/>
    </location>
</feature>
<feature type="splice variant" id="VSP_032470" description="In isoform 2." evidence="4">
    <original>GYAGFIPRFTWVMGLNYRDGVMQAMDEFDKSQFLFRNPHCDLGEKLPGTHWPSNHIYSSQGLIPFYMGFI</original>
    <variation>EQASGLGGPPLPPSCFQEPSFSQDEAVPCLPVPIWPHQTVANVQGTKGSLAWLP</variation>
    <location>
        <begin position="218"/>
        <end position="287"/>
    </location>
</feature>
<feature type="splice variant" id="VSP_032471" description="In isoform 2." evidence="4">
    <location>
        <begin position="288"/>
        <end position="317"/>
    </location>
</feature>
<name>CMI2A_HUMAN</name>
<keyword id="KW-0025">Alternative splicing</keyword>
<keyword id="KW-0966">Cell projection</keyword>
<keyword id="KW-0969">Cilium</keyword>
<keyword id="KW-0963">Cytoplasm</keyword>
<keyword id="KW-0206">Cytoskeleton</keyword>
<keyword id="KW-0282">Flagellum</keyword>
<keyword id="KW-1267">Proteomics identification</keyword>
<keyword id="KW-1185">Reference proteome</keyword>
<organism>
    <name type="scientific">Homo sapiens</name>
    <name type="common">Human</name>
    <dbReference type="NCBI Taxonomy" id="9606"/>
    <lineage>
        <taxon>Eukaryota</taxon>
        <taxon>Metazoa</taxon>
        <taxon>Chordata</taxon>
        <taxon>Craniata</taxon>
        <taxon>Vertebrata</taxon>
        <taxon>Euteleostomi</taxon>
        <taxon>Mammalia</taxon>
        <taxon>Eutheria</taxon>
        <taxon>Euarchontoglires</taxon>
        <taxon>Primates</taxon>
        <taxon>Haplorrhini</taxon>
        <taxon>Catarrhini</taxon>
        <taxon>Hominidae</taxon>
        <taxon>Homo</taxon>
    </lineage>
</organism>
<sequence>MTTTQKHDLFTPEPHYVPGYAGFFPQLRYQVGNTYGRTTGQLLTDPSVQKSPCSVLSPMSKPKFIEDFSQSKPPRVPCQDLTEPYIPHYTSLKPSKNFEILGQLPPLEVDAQEPPGVENIPRQILLPAGFTPDTPHPPCPPGRKGDSRDLGHPVYGEEAWKSATPVCEAPRQHQLYHCQRDEYPPPARRQQETLDVGSFQRLPQLDHPNLIQRKAISGYAGFIPRFTWVMGLNYRDGVMQAMDEFDKSQFLFRNPHCDLGEKLPGTHWPSNHIYSSQGLIPFYMGFIPAMQDNYALTFGNSTRRAYWKEWAKRNHTL</sequence>
<comment type="function">
    <text evidence="2">Microtubule inner protein (MIP) part of the dynein-decorated doublet microtubules (DMTs) in flagellum axoneme. Binds to the intra-tubulin interfaces.</text>
</comment>
<comment type="subunit">
    <text evidence="2">Microtubule inner protein component of sperm flagellar doublet microtubules.</text>
</comment>
<comment type="interaction">
    <interactant intactId="EBI-12811067">
        <id>Q6J272</id>
    </interactant>
    <interactant intactId="EBI-740220">
        <id>O14964</id>
        <label>HGS</label>
    </interactant>
    <organismsDiffer>false</organismsDiffer>
    <experiments>3</experiments>
</comment>
<comment type="interaction">
    <interactant intactId="EBI-12811067">
        <id>Q6J272</id>
    </interactant>
    <interactant intactId="EBI-9027467">
        <id>O75360</id>
        <label>PROP1</label>
    </interactant>
    <organismsDiffer>false</organismsDiffer>
    <experiments>3</experiments>
</comment>
<comment type="interaction">
    <interactant intactId="EBI-12811067">
        <id>Q6J272</id>
    </interactant>
    <interactant intactId="EBI-372094">
        <id>Q9BQY4</id>
        <label>RHOXF2</label>
    </interactant>
    <organismsDiffer>false</organismsDiffer>
    <experiments>3</experiments>
</comment>
<comment type="interaction">
    <interactant intactId="EBI-12811067">
        <id>Q6J272</id>
    </interactant>
    <interactant intactId="EBI-8463848">
        <id>Q8NB12</id>
        <label>SMYD1</label>
    </interactant>
    <organismsDiffer>false</organismsDiffer>
    <experiments>3</experiments>
</comment>
<comment type="subcellular location">
    <subcellularLocation>
        <location evidence="1">Cytoplasm</location>
        <location evidence="1">Cytoskeleton</location>
        <location evidence="1">Flagellum axoneme</location>
    </subcellularLocation>
</comment>
<comment type="alternative products">
    <event type="alternative splicing"/>
    <isoform>
        <id>Q6J272-1</id>
        <name>1</name>
        <sequence type="displayed"/>
    </isoform>
    <isoform>
        <id>Q6J272-2</id>
        <name>2</name>
        <sequence type="described" ref="VSP_032470 VSP_032471"/>
    </isoform>
</comment>
<comment type="similarity">
    <text evidence="5">Belongs to the CIMIP2 family.</text>
</comment>
<reference key="1">
    <citation type="journal article" date="2004" name="Nat. Genet.">
        <title>Complete sequencing and characterization of 21,243 full-length human cDNAs.</title>
        <authorList>
            <person name="Ota T."/>
            <person name="Suzuki Y."/>
            <person name="Nishikawa T."/>
            <person name="Otsuki T."/>
            <person name="Sugiyama T."/>
            <person name="Irie R."/>
            <person name="Wakamatsu A."/>
            <person name="Hayashi K."/>
            <person name="Sato H."/>
            <person name="Nagai K."/>
            <person name="Kimura K."/>
            <person name="Makita H."/>
            <person name="Sekine M."/>
            <person name="Obayashi M."/>
            <person name="Nishi T."/>
            <person name="Shibahara T."/>
            <person name="Tanaka T."/>
            <person name="Ishii S."/>
            <person name="Yamamoto J."/>
            <person name="Saito K."/>
            <person name="Kawai Y."/>
            <person name="Isono Y."/>
            <person name="Nakamura Y."/>
            <person name="Nagahari K."/>
            <person name="Murakami K."/>
            <person name="Yasuda T."/>
            <person name="Iwayanagi T."/>
            <person name="Wagatsuma M."/>
            <person name="Shiratori A."/>
            <person name="Sudo H."/>
            <person name="Hosoiri T."/>
            <person name="Kaku Y."/>
            <person name="Kodaira H."/>
            <person name="Kondo H."/>
            <person name="Sugawara M."/>
            <person name="Takahashi M."/>
            <person name="Kanda K."/>
            <person name="Yokoi T."/>
            <person name="Furuya T."/>
            <person name="Kikkawa E."/>
            <person name="Omura Y."/>
            <person name="Abe K."/>
            <person name="Kamihara K."/>
            <person name="Katsuta N."/>
            <person name="Sato K."/>
            <person name="Tanikawa M."/>
            <person name="Yamazaki M."/>
            <person name="Ninomiya K."/>
            <person name="Ishibashi T."/>
            <person name="Yamashita H."/>
            <person name="Murakawa K."/>
            <person name="Fujimori K."/>
            <person name="Tanai H."/>
            <person name="Kimata M."/>
            <person name="Watanabe M."/>
            <person name="Hiraoka S."/>
            <person name="Chiba Y."/>
            <person name="Ishida S."/>
            <person name="Ono Y."/>
            <person name="Takiguchi S."/>
            <person name="Watanabe S."/>
            <person name="Yosida M."/>
            <person name="Hotuta T."/>
            <person name="Kusano J."/>
            <person name="Kanehori K."/>
            <person name="Takahashi-Fujii A."/>
            <person name="Hara H."/>
            <person name="Tanase T.-O."/>
            <person name="Nomura Y."/>
            <person name="Togiya S."/>
            <person name="Komai F."/>
            <person name="Hara R."/>
            <person name="Takeuchi K."/>
            <person name="Arita M."/>
            <person name="Imose N."/>
            <person name="Musashino K."/>
            <person name="Yuuki H."/>
            <person name="Oshima A."/>
            <person name="Sasaki N."/>
            <person name="Aotsuka S."/>
            <person name="Yoshikawa Y."/>
            <person name="Matsunawa H."/>
            <person name="Ichihara T."/>
            <person name="Shiohata N."/>
            <person name="Sano S."/>
            <person name="Moriya S."/>
            <person name="Momiyama H."/>
            <person name="Satoh N."/>
            <person name="Takami S."/>
            <person name="Terashima Y."/>
            <person name="Suzuki O."/>
            <person name="Nakagawa S."/>
            <person name="Senoh A."/>
            <person name="Mizoguchi H."/>
            <person name="Goto Y."/>
            <person name="Shimizu F."/>
            <person name="Wakebe H."/>
            <person name="Hishigaki H."/>
            <person name="Watanabe T."/>
            <person name="Sugiyama A."/>
            <person name="Takemoto M."/>
            <person name="Kawakami B."/>
            <person name="Yamazaki M."/>
            <person name="Watanabe K."/>
            <person name="Kumagai A."/>
            <person name="Itakura S."/>
            <person name="Fukuzumi Y."/>
            <person name="Fujimori Y."/>
            <person name="Komiyama M."/>
            <person name="Tashiro H."/>
            <person name="Tanigami A."/>
            <person name="Fujiwara T."/>
            <person name="Ono T."/>
            <person name="Yamada K."/>
            <person name="Fujii Y."/>
            <person name="Ozaki K."/>
            <person name="Hirao M."/>
            <person name="Ohmori Y."/>
            <person name="Kawabata A."/>
            <person name="Hikiji T."/>
            <person name="Kobatake N."/>
            <person name="Inagaki H."/>
            <person name="Ikema Y."/>
            <person name="Okamoto S."/>
            <person name="Okitani R."/>
            <person name="Kawakami T."/>
            <person name="Noguchi S."/>
            <person name="Itoh T."/>
            <person name="Shigeta K."/>
            <person name="Senba T."/>
            <person name="Matsumura K."/>
            <person name="Nakajima Y."/>
            <person name="Mizuno T."/>
            <person name="Morinaga M."/>
            <person name="Sasaki M."/>
            <person name="Togashi T."/>
            <person name="Oyama M."/>
            <person name="Hata H."/>
            <person name="Watanabe M."/>
            <person name="Komatsu T."/>
            <person name="Mizushima-Sugano J."/>
            <person name="Satoh T."/>
            <person name="Shirai Y."/>
            <person name="Takahashi Y."/>
            <person name="Nakagawa K."/>
            <person name="Okumura K."/>
            <person name="Nagase T."/>
            <person name="Nomura N."/>
            <person name="Kikuchi H."/>
            <person name="Masuho Y."/>
            <person name="Yamashita R."/>
            <person name="Nakai K."/>
            <person name="Yada T."/>
            <person name="Nakamura Y."/>
            <person name="Ohara O."/>
            <person name="Isogai T."/>
            <person name="Sugano S."/>
        </authorList>
    </citation>
    <scope>NUCLEOTIDE SEQUENCE [LARGE SCALE MRNA] (ISOFORM 2)</scope>
    <source>
        <tissue>Testis</tissue>
    </source>
</reference>
<reference key="2">
    <citation type="submission" date="2004-04" db="EMBL/GenBank/DDBJ databases">
        <title>A new spermatogenesis-related gene.</title>
        <authorList>
            <person name="Hu T.H."/>
            <person name="Miao S.Y."/>
            <person name="Zhang X.D."/>
            <person name="Qiao Y."/>
            <person name="Liang G."/>
            <person name="Wang L.F."/>
        </authorList>
    </citation>
    <scope>NUCLEOTIDE SEQUENCE [LARGE SCALE MRNA] (ISOFORM 1)</scope>
    <source>
        <tissue>Testis</tissue>
    </source>
</reference>
<reference key="3">
    <citation type="journal article" date="2004" name="Nature">
        <title>DNA sequence and analysis of human chromosome 9.</title>
        <authorList>
            <person name="Humphray S.J."/>
            <person name="Oliver K."/>
            <person name="Hunt A.R."/>
            <person name="Plumb R.W."/>
            <person name="Loveland J.E."/>
            <person name="Howe K.L."/>
            <person name="Andrews T.D."/>
            <person name="Searle S."/>
            <person name="Hunt S.E."/>
            <person name="Scott C.E."/>
            <person name="Jones M.C."/>
            <person name="Ainscough R."/>
            <person name="Almeida J.P."/>
            <person name="Ambrose K.D."/>
            <person name="Ashwell R.I.S."/>
            <person name="Babbage A.K."/>
            <person name="Babbage S."/>
            <person name="Bagguley C.L."/>
            <person name="Bailey J."/>
            <person name="Banerjee R."/>
            <person name="Barker D.J."/>
            <person name="Barlow K.F."/>
            <person name="Bates K."/>
            <person name="Beasley H."/>
            <person name="Beasley O."/>
            <person name="Bird C.P."/>
            <person name="Bray-Allen S."/>
            <person name="Brown A.J."/>
            <person name="Brown J.Y."/>
            <person name="Burford D."/>
            <person name="Burrill W."/>
            <person name="Burton J."/>
            <person name="Carder C."/>
            <person name="Carter N.P."/>
            <person name="Chapman J.C."/>
            <person name="Chen Y."/>
            <person name="Clarke G."/>
            <person name="Clark S.Y."/>
            <person name="Clee C.M."/>
            <person name="Clegg S."/>
            <person name="Collier R.E."/>
            <person name="Corby N."/>
            <person name="Crosier M."/>
            <person name="Cummings A.T."/>
            <person name="Davies J."/>
            <person name="Dhami P."/>
            <person name="Dunn M."/>
            <person name="Dutta I."/>
            <person name="Dyer L.W."/>
            <person name="Earthrowl M.E."/>
            <person name="Faulkner L."/>
            <person name="Fleming C.J."/>
            <person name="Frankish A."/>
            <person name="Frankland J.A."/>
            <person name="French L."/>
            <person name="Fricker D.G."/>
            <person name="Garner P."/>
            <person name="Garnett J."/>
            <person name="Ghori J."/>
            <person name="Gilbert J.G.R."/>
            <person name="Glison C."/>
            <person name="Grafham D.V."/>
            <person name="Gribble S."/>
            <person name="Griffiths C."/>
            <person name="Griffiths-Jones S."/>
            <person name="Grocock R."/>
            <person name="Guy J."/>
            <person name="Hall R.E."/>
            <person name="Hammond S."/>
            <person name="Harley J.L."/>
            <person name="Harrison E.S.I."/>
            <person name="Hart E.A."/>
            <person name="Heath P.D."/>
            <person name="Henderson C.D."/>
            <person name="Hopkins B.L."/>
            <person name="Howard P.J."/>
            <person name="Howden P.J."/>
            <person name="Huckle E."/>
            <person name="Johnson C."/>
            <person name="Johnson D."/>
            <person name="Joy A.A."/>
            <person name="Kay M."/>
            <person name="Keenan S."/>
            <person name="Kershaw J.K."/>
            <person name="Kimberley A.M."/>
            <person name="King A."/>
            <person name="Knights A."/>
            <person name="Laird G.K."/>
            <person name="Langford C."/>
            <person name="Lawlor S."/>
            <person name="Leongamornlert D.A."/>
            <person name="Leversha M."/>
            <person name="Lloyd C."/>
            <person name="Lloyd D.M."/>
            <person name="Lovell J."/>
            <person name="Martin S."/>
            <person name="Mashreghi-Mohammadi M."/>
            <person name="Matthews L."/>
            <person name="McLaren S."/>
            <person name="McLay K.E."/>
            <person name="McMurray A."/>
            <person name="Milne S."/>
            <person name="Nickerson T."/>
            <person name="Nisbett J."/>
            <person name="Nordsiek G."/>
            <person name="Pearce A.V."/>
            <person name="Peck A.I."/>
            <person name="Porter K.M."/>
            <person name="Pandian R."/>
            <person name="Pelan S."/>
            <person name="Phillimore B."/>
            <person name="Povey S."/>
            <person name="Ramsey Y."/>
            <person name="Rand V."/>
            <person name="Scharfe M."/>
            <person name="Sehra H.K."/>
            <person name="Shownkeen R."/>
            <person name="Sims S.K."/>
            <person name="Skuce C.D."/>
            <person name="Smith M."/>
            <person name="Steward C.A."/>
            <person name="Swarbreck D."/>
            <person name="Sycamore N."/>
            <person name="Tester J."/>
            <person name="Thorpe A."/>
            <person name="Tracey A."/>
            <person name="Tromans A."/>
            <person name="Thomas D.W."/>
            <person name="Wall M."/>
            <person name="Wallis J.M."/>
            <person name="West A.P."/>
            <person name="Whitehead S.L."/>
            <person name="Willey D.L."/>
            <person name="Williams S.A."/>
            <person name="Wilming L."/>
            <person name="Wray P.W."/>
            <person name="Young L."/>
            <person name="Ashurst J.L."/>
            <person name="Coulson A."/>
            <person name="Blocker H."/>
            <person name="Durbin R.M."/>
            <person name="Sulston J.E."/>
            <person name="Hubbard T."/>
            <person name="Jackson M.J."/>
            <person name="Bentley D.R."/>
            <person name="Beck S."/>
            <person name="Rogers J."/>
            <person name="Dunham I."/>
        </authorList>
    </citation>
    <scope>NUCLEOTIDE SEQUENCE [LARGE SCALE GENOMIC DNA]</scope>
</reference>
<reference key="4">
    <citation type="submission" date="2005-07" db="EMBL/GenBank/DDBJ databases">
        <authorList>
            <person name="Mural R.J."/>
            <person name="Istrail S."/>
            <person name="Sutton G.G."/>
            <person name="Florea L."/>
            <person name="Halpern A.L."/>
            <person name="Mobarry C.M."/>
            <person name="Lippert R."/>
            <person name="Walenz B."/>
            <person name="Shatkay H."/>
            <person name="Dew I."/>
            <person name="Miller J.R."/>
            <person name="Flanigan M.J."/>
            <person name="Edwards N.J."/>
            <person name="Bolanos R."/>
            <person name="Fasulo D."/>
            <person name="Halldorsson B.V."/>
            <person name="Hannenhalli S."/>
            <person name="Turner R."/>
            <person name="Yooseph S."/>
            <person name="Lu F."/>
            <person name="Nusskern D.R."/>
            <person name="Shue B.C."/>
            <person name="Zheng X.H."/>
            <person name="Zhong F."/>
            <person name="Delcher A.L."/>
            <person name="Huson D.H."/>
            <person name="Kravitz S.A."/>
            <person name="Mouchard L."/>
            <person name="Reinert K."/>
            <person name="Remington K.A."/>
            <person name="Clark A.G."/>
            <person name="Waterman M.S."/>
            <person name="Eichler E.E."/>
            <person name="Adams M.D."/>
            <person name="Hunkapiller M.W."/>
            <person name="Myers E.W."/>
            <person name="Venter J.C."/>
        </authorList>
    </citation>
    <scope>NUCLEOTIDE SEQUENCE [LARGE SCALE GENOMIC DNA]</scope>
</reference>
<reference key="5">
    <citation type="journal article" date="2004" name="Genome Res.">
        <title>The status, quality, and expansion of the NIH full-length cDNA project: the Mammalian Gene Collection (MGC).</title>
        <authorList>
            <consortium name="The MGC Project Team"/>
        </authorList>
    </citation>
    <scope>NUCLEOTIDE SEQUENCE [LARGE SCALE MRNA] (ISOFORM 1)</scope>
    <source>
        <tissue>Brain</tissue>
    </source>
</reference>
<gene>
    <name evidence="6" type="primary">CIMIP2A</name>
    <name type="synonym">FAM166A</name>
    <name type="ORF">HSD46</name>
</gene>
<evidence type="ECO:0000250" key="1">
    <source>
        <dbReference type="UniProtKB" id="G3X6E2"/>
    </source>
</evidence>
<evidence type="ECO:0000250" key="2">
    <source>
        <dbReference type="UniProtKB" id="Q9D4K5"/>
    </source>
</evidence>
<evidence type="ECO:0000256" key="3">
    <source>
        <dbReference type="SAM" id="MobiDB-lite"/>
    </source>
</evidence>
<evidence type="ECO:0000303" key="4">
    <source>
    </source>
</evidence>
<evidence type="ECO:0000305" key="5"/>
<evidence type="ECO:0000312" key="6">
    <source>
        <dbReference type="HGNC" id="HGNC:33818"/>
    </source>
</evidence>
<proteinExistence type="evidence at protein level"/>
<protein>
    <recommendedName>
        <fullName evidence="5">Ciliary microtubule inner protein 2A</fullName>
    </recommendedName>
</protein>
<dbReference type="EMBL" id="AK097419">
    <property type="protein sequence ID" value="BAC05044.1"/>
    <property type="molecule type" value="mRNA"/>
</dbReference>
<dbReference type="EMBL" id="AY604177">
    <property type="protein sequence ID" value="AAT36740.1"/>
    <property type="molecule type" value="mRNA"/>
</dbReference>
<dbReference type="EMBL" id="BX255925">
    <property type="status" value="NOT_ANNOTATED_CDS"/>
    <property type="molecule type" value="Genomic_DNA"/>
</dbReference>
<dbReference type="EMBL" id="CH471090">
    <property type="protein sequence ID" value="EAW88371.1"/>
    <property type="molecule type" value="Genomic_DNA"/>
</dbReference>
<dbReference type="EMBL" id="CH471090">
    <property type="protein sequence ID" value="EAW88372.1"/>
    <property type="molecule type" value="Genomic_DNA"/>
</dbReference>
<dbReference type="EMBL" id="BC132916">
    <property type="protein sequence ID" value="AAI32917.1"/>
    <property type="molecule type" value="mRNA"/>
</dbReference>
<dbReference type="EMBL" id="BC132918">
    <property type="protein sequence ID" value="AAI32919.1"/>
    <property type="molecule type" value="mRNA"/>
</dbReference>
<dbReference type="CCDS" id="CCDS35186.1">
    <molecule id="Q6J272-1"/>
</dbReference>
<dbReference type="RefSeq" id="NP_001001710.1">
    <molecule id="Q6J272-1"/>
    <property type="nucleotide sequence ID" value="NM_001001710.3"/>
</dbReference>
<dbReference type="BioGRID" id="135153">
    <property type="interactions" value="9"/>
</dbReference>
<dbReference type="FunCoup" id="Q6J272">
    <property type="interactions" value="9"/>
</dbReference>
<dbReference type="IntAct" id="Q6J272">
    <property type="interactions" value="6"/>
</dbReference>
<dbReference type="MINT" id="Q6J272"/>
<dbReference type="STRING" id="9606.ENSP00000344729"/>
<dbReference type="GlyGen" id="Q6J272">
    <property type="glycosylation" value="1 site, 1 O-linked glycan (1 site)"/>
</dbReference>
<dbReference type="iPTMnet" id="Q6J272"/>
<dbReference type="PhosphoSitePlus" id="Q6J272"/>
<dbReference type="BioMuta" id="FAM166A"/>
<dbReference type="DMDM" id="74709550"/>
<dbReference type="MassIVE" id="Q6J272"/>
<dbReference type="PaxDb" id="9606-ENSP00000344729"/>
<dbReference type="PeptideAtlas" id="Q6J272"/>
<dbReference type="ProteomicsDB" id="66505">
    <molecule id="Q6J272-1"/>
</dbReference>
<dbReference type="ProteomicsDB" id="66506">
    <molecule id="Q6J272-2"/>
</dbReference>
<dbReference type="Antibodypedia" id="18988">
    <property type="antibodies" value="56 antibodies from 12 providers"/>
</dbReference>
<dbReference type="DNASU" id="401565"/>
<dbReference type="Ensembl" id="ENST00000344774.6">
    <molecule id="Q6J272-1"/>
    <property type="protein sequence ID" value="ENSP00000344729.4"/>
    <property type="gene ID" value="ENSG00000188163.8"/>
</dbReference>
<dbReference type="GeneID" id="401565"/>
<dbReference type="KEGG" id="hsa:401565"/>
<dbReference type="MANE-Select" id="ENST00000344774.6">
    <property type="protein sequence ID" value="ENSP00000344729.4"/>
    <property type="RefSeq nucleotide sequence ID" value="NM_001001710.3"/>
    <property type="RefSeq protein sequence ID" value="NP_001001710.1"/>
</dbReference>
<dbReference type="UCSC" id="uc004cmi.3">
    <molecule id="Q6J272-1"/>
    <property type="organism name" value="human"/>
</dbReference>
<dbReference type="AGR" id="HGNC:33818"/>
<dbReference type="CTD" id="401565"/>
<dbReference type="GeneCards" id="CIMIP2A"/>
<dbReference type="HGNC" id="HGNC:33818">
    <property type="gene designation" value="CIMIP2A"/>
</dbReference>
<dbReference type="HPA" id="ENSG00000188163">
    <property type="expression patterns" value="Tissue enriched (testis)"/>
</dbReference>
<dbReference type="neXtProt" id="NX_Q6J272"/>
<dbReference type="OpenTargets" id="ENSG00000188163"/>
<dbReference type="PharmGKB" id="PA162387021"/>
<dbReference type="VEuPathDB" id="HostDB:ENSG00000188163"/>
<dbReference type="eggNOG" id="ENOG502QSNH">
    <property type="taxonomic scope" value="Eukaryota"/>
</dbReference>
<dbReference type="GeneTree" id="ENSGT00730000111343"/>
<dbReference type="HOGENOM" id="CLU_076252_0_0_1"/>
<dbReference type="InParanoid" id="Q6J272"/>
<dbReference type="OMA" id="FRNPHCD"/>
<dbReference type="OrthoDB" id="2019884at2759"/>
<dbReference type="PAN-GO" id="Q6J272">
    <property type="GO annotations" value="0 GO annotations based on evolutionary models"/>
</dbReference>
<dbReference type="PhylomeDB" id="Q6J272"/>
<dbReference type="TreeFam" id="TF336316"/>
<dbReference type="PathwayCommons" id="Q6J272"/>
<dbReference type="SignaLink" id="Q6J272"/>
<dbReference type="BioGRID-ORCS" id="401565">
    <property type="hits" value="30 hits in 1144 CRISPR screens"/>
</dbReference>
<dbReference type="ChiTaRS" id="FAM166A">
    <property type="organism name" value="human"/>
</dbReference>
<dbReference type="GenomeRNAi" id="401565"/>
<dbReference type="Pharos" id="Q6J272">
    <property type="development level" value="Tdark"/>
</dbReference>
<dbReference type="PRO" id="PR:Q6J272"/>
<dbReference type="Proteomes" id="UP000005640">
    <property type="component" value="Chromosome 9"/>
</dbReference>
<dbReference type="RNAct" id="Q6J272">
    <property type="molecule type" value="protein"/>
</dbReference>
<dbReference type="Bgee" id="ENSG00000188163">
    <property type="expression patterns" value="Expressed in left testis and 113 other cell types or tissues"/>
</dbReference>
<dbReference type="ExpressionAtlas" id="Q6J272">
    <property type="expression patterns" value="baseline and differential"/>
</dbReference>
<dbReference type="GO" id="GO:0160111">
    <property type="term" value="C:axonemal A tubule inner sheath"/>
    <property type="evidence" value="ECO:0000250"/>
    <property type="project" value="UniProtKB"/>
</dbReference>
<dbReference type="GO" id="GO:0036064">
    <property type="term" value="C:ciliary basal body"/>
    <property type="evidence" value="ECO:0000314"/>
    <property type="project" value="GO_Central"/>
</dbReference>
<dbReference type="GO" id="GO:0005634">
    <property type="term" value="C:nucleus"/>
    <property type="evidence" value="ECO:0007005"/>
    <property type="project" value="UniProtKB"/>
</dbReference>
<dbReference type="GO" id="GO:0036126">
    <property type="term" value="C:sperm flagellum"/>
    <property type="evidence" value="ECO:0000250"/>
    <property type="project" value="UniProtKB"/>
</dbReference>
<dbReference type="GO" id="GO:0030317">
    <property type="term" value="P:flagellated sperm motility"/>
    <property type="evidence" value="ECO:0000250"/>
    <property type="project" value="UniProtKB"/>
</dbReference>
<dbReference type="InterPro" id="IPR052683">
    <property type="entry name" value="CIMIP2A"/>
</dbReference>
<dbReference type="InterPro" id="IPR018902">
    <property type="entry name" value="CMI2A-C-like_dom"/>
</dbReference>
<dbReference type="PANTHER" id="PTHR47299">
    <property type="entry name" value="PROTEIN FAM166A"/>
    <property type="match status" value="1"/>
</dbReference>
<dbReference type="PANTHER" id="PTHR47299:SF1">
    <property type="entry name" value="PROTEIN FAM166A"/>
    <property type="match status" value="1"/>
</dbReference>
<dbReference type="Pfam" id="PF10629">
    <property type="entry name" value="CMI2B-like"/>
    <property type="match status" value="1"/>
</dbReference>
<accession>Q6J272</accession>
<accession>A6NND9</accession>
<accession>Q8N830</accession>